<organism>
    <name type="scientific">Dasypus novemcinctus</name>
    <name type="common">Nine-banded armadillo</name>
    <dbReference type="NCBI Taxonomy" id="9361"/>
    <lineage>
        <taxon>Eukaryota</taxon>
        <taxon>Metazoa</taxon>
        <taxon>Chordata</taxon>
        <taxon>Craniata</taxon>
        <taxon>Vertebrata</taxon>
        <taxon>Euteleostomi</taxon>
        <taxon>Mammalia</taxon>
        <taxon>Eutheria</taxon>
        <taxon>Xenarthra</taxon>
        <taxon>Cingulata</taxon>
        <taxon>Dasypodidae</taxon>
        <taxon>Dasypus</taxon>
    </lineage>
</organism>
<feature type="chain" id="PRO_0000384398" description="THO complex subunit 2">
    <location>
        <begin position="1"/>
        <end position="1613"/>
    </location>
</feature>
<feature type="region of interest" description="Disordered" evidence="4">
    <location>
        <begin position="1182"/>
        <end position="1586"/>
    </location>
</feature>
<feature type="coiled-coil region" evidence="3">
    <location>
        <begin position="293"/>
        <end position="339"/>
    </location>
</feature>
<feature type="coiled-coil region" evidence="3">
    <location>
        <begin position="896"/>
        <end position="965"/>
    </location>
</feature>
<feature type="coiled-coil region" evidence="3">
    <location>
        <begin position="1464"/>
        <end position="1491"/>
    </location>
</feature>
<feature type="short sequence motif" description="Nuclear localization signal" evidence="3">
    <location>
        <begin position="923"/>
        <end position="928"/>
    </location>
</feature>
<feature type="compositionally biased region" description="Basic and acidic residues" evidence="4">
    <location>
        <begin position="1218"/>
        <end position="1234"/>
    </location>
</feature>
<feature type="compositionally biased region" description="Low complexity" evidence="4">
    <location>
        <begin position="1251"/>
        <end position="1262"/>
    </location>
</feature>
<feature type="compositionally biased region" description="Basic and acidic residues" evidence="4">
    <location>
        <begin position="1264"/>
        <end position="1284"/>
    </location>
</feature>
<feature type="compositionally biased region" description="Basic and acidic residues" evidence="4">
    <location>
        <begin position="1293"/>
        <end position="1342"/>
    </location>
</feature>
<feature type="compositionally biased region" description="Basic and acidic residues" evidence="4">
    <location>
        <begin position="1352"/>
        <end position="1382"/>
    </location>
</feature>
<feature type="compositionally biased region" description="Polar residues" evidence="4">
    <location>
        <begin position="1415"/>
        <end position="1424"/>
    </location>
</feature>
<feature type="compositionally biased region" description="Basic and acidic residues" evidence="4">
    <location>
        <begin position="1448"/>
        <end position="1503"/>
    </location>
</feature>
<feature type="compositionally biased region" description="Basic and acidic residues" evidence="4">
    <location>
        <begin position="1523"/>
        <end position="1584"/>
    </location>
</feature>
<feature type="modified residue" description="Phosphoserine" evidence="1">
    <location>
        <position position="1222"/>
    </location>
</feature>
<feature type="modified residue" description="Phosphothreonine" evidence="2">
    <location>
        <position position="1384"/>
    </location>
</feature>
<feature type="modified residue" description="Phosphoserine" evidence="2">
    <location>
        <position position="1389"/>
    </location>
</feature>
<feature type="modified residue" description="Phosphoserine" evidence="2">
    <location>
        <position position="1392"/>
    </location>
</feature>
<feature type="modified residue" description="Phosphoserine" evidence="2">
    <location>
        <position position="1416"/>
    </location>
</feature>
<feature type="modified residue" description="Phosphothreonine" evidence="2">
    <location>
        <position position="1442"/>
    </location>
</feature>
<feature type="modified residue" description="Phosphoserine" evidence="2">
    <location>
        <position position="1449"/>
    </location>
</feature>
<feature type="modified residue" description="Phosphoserine" evidence="2">
    <location>
        <position position="1485"/>
    </location>
</feature>
<feature type="modified residue" description="Phosphoserine" evidence="2">
    <location>
        <position position="1515"/>
    </location>
</feature>
<reference key="1">
    <citation type="submission" date="2009-04" db="EMBL/GenBank/DDBJ databases">
        <title>NISC comparative sequencing initiative.</title>
        <authorList>
            <person name="Antonellis A."/>
            <person name="Ayele K."/>
            <person name="Benjamin B."/>
            <person name="Blakesley R.W."/>
            <person name="Boakye A."/>
            <person name="Bouffard G.G."/>
            <person name="Brinkley C."/>
            <person name="Brooks S."/>
            <person name="Chu G."/>
            <person name="Coleman H."/>
            <person name="Engle J."/>
            <person name="Gestole M."/>
            <person name="Greene A."/>
            <person name="Guan X."/>
            <person name="Gupta J."/>
            <person name="Haghighi P."/>
            <person name="Han J."/>
            <person name="Hansen N."/>
            <person name="Ho S.-L."/>
            <person name="Hu P."/>
            <person name="Hunter G."/>
            <person name="Hurle B."/>
            <person name="Idol J.R."/>
            <person name="Kwong P."/>
            <person name="Laric P."/>
            <person name="Larson S."/>
            <person name="Lee-Lin S.-Q."/>
            <person name="Legaspi R."/>
            <person name="Madden M."/>
            <person name="Maduro Q.L."/>
            <person name="Maduro V.B."/>
            <person name="Margulies E.H."/>
            <person name="Masiello C."/>
            <person name="Maskeri B."/>
            <person name="McDowell J."/>
            <person name="Mojidi H.A."/>
            <person name="Mullikin J.C."/>
            <person name="Oestreicher J.S."/>
            <person name="Park M."/>
            <person name="Portnoy M.E."/>
            <person name="Prasad A."/>
            <person name="Puri O."/>
            <person name="Reddix-Dugue N."/>
            <person name="Schandler K."/>
            <person name="Schueler M.G."/>
            <person name="Sison C."/>
            <person name="Stantripop S."/>
            <person name="Stephen E."/>
            <person name="Taye A."/>
            <person name="Thomas J.W."/>
            <person name="Thomas P.J."/>
            <person name="Tsipouri V."/>
            <person name="Ung L."/>
            <person name="Vogt J.L."/>
            <person name="Wetherby K.D."/>
            <person name="Young A."/>
            <person name="Green E.D."/>
        </authorList>
    </citation>
    <scope>NUCLEOTIDE SEQUENCE [LARGE SCALE GENOMIC DNA]</scope>
</reference>
<accession>C1FXW9</accession>
<sequence>MAAATVVVPAEWIKNWEKSGRGEFLHLCRILSENKGHDSSTYRDFQQALYELSYHVIKGNLKHEQASNVLNDISEFREDMPSILADVFCILDIETNCLEEKSKRDYFTQLVLACLYLVSDTVLKERLDPETLESLGLIKQSQQFNQKSVKIKTKLFYKQQKFNLLREENEGYAKLIAELGQDLSGNITSDLILENIKSLIGCFNLDPNRVLDVILEVFECRPEHDDFFISLLESYMSMCEPQTLCHILGFKFKFYQEPNGETPSSLYRVAAVLLQFNLIDLDDLYVHLLPADNSIMDEHKREIVEAKQIVRKLTMVVLSSEKIDEREKEKEKEEEKVEKPPDNQKLGLLEALLKIGDWQHAQNIMDQMPPYYAASHKLIALAICKLIHITIEPLYRRVGVPKGAKGSPVNALQNKRAPKQAENFEDLRRDVFNMFCYLGPHLSHDPILFAKVVRIGKSFMKEFQSDGSKSEDKEKTEVILSCLLSITDQVLLPSLSLMDCNACMSEELWGMFKTFPYQHRYRLYGQWKNETYNSHPLLVKVKAQTIDRAKYIMKRLTKENVKPSGRQIGKLSHSNPTILFDYILSQIQKYDNLITPVVDSLKYLTSLNYDVLAYCIIEALANPEKERMKHDDTTISSWLQSLASFCGAVFRKYPIDLAGLLQYVANQLKAGKSFDLLILKEVVQKMAGIEITEEMTMEQLEAMTGGEQLKAEGGYFGQIRNTKKSSQRLKDALLDHDLALPLCLLMAQQRNGVIFQEGGEKHLKLVGKLYDQCHDTLVQFGGFLASNLSTEDYIKRVPSIDVLCNEFHTPHDAAFFLSRPMYAHHISSKYDELKKSEKGSKQQHKVHKYITSCEMVMAPVHEAVVSLHVSKVWDDISPQFYATFWSLTMYDLAVPHTSYEREVNKLKIQMKAIDDNQEMPPNKKKKEKERCTALQDKLLEEEKKQMEHVQRVLQRLKLEKDNWLLAKSTKNETITKFLQLCIFPRCIFSAIDAVYCARFVELVHQQKTPNFSTLLCYDRVFSDIIYTVASCTENEASRYGRFLCCMLETVTRWHSDRATYEKECGNYPGFLTILRATGFDGGNKADQLDYENFRHVVHKWHYKLTKASVHCLETGEYTHIRNILIVLTKILPWYPKVLNLGQALERRVHKICQEEKEKRPDLYALAMGYSGQLKSRKPYMIPENEFHNKDPPPRNAVASVQNGPGGGPSSSSIGSASKSDESSTEETDKSRERSQCSVKAVNKASSATPKGNSSNGNSGSNSKAVKENEKEKGKEKEKEKKEKTPATTPEARVLGKDGKEKPKEERPNKDEKARETKERTPKSDKEKEKFKKEEKAKDEKFKTAIPNVESKSTQEKEREKEPSRERDIAKDMKSKENVKGGEKTAVSGSLKSPVPRSDIAEPEREQKRRKIDTHPSPSHSSTVKDSLIELKESSAKLYINHTPPPLSKSKEREMDKKDLDKSRERSREREKKDEKDRKERKRDHSNNDREVPPDLTKRRKEENGTMGVSKHKSESPCESPYANEKDKEKNKSKSSGKEKSSDSFKSEKMDKISSGGKKESRHDKEKIEKKEKRDSSGGKEEKKQYPFHLNNALNQCMESFDADNVLKVYSSVV</sequence>
<comment type="function">
    <text evidence="2">Component of the THO subcomplex of the TREX complex which is thought to couple mRNA transcription, processing and nuclear export, and which specifically associates with spliced mRNA and not with unspliced pre-mRNA. Required for efficient export of polyadenylated RNA and spliced mRNA. The THOC1-THOC2-THOC3 core complex alone is sufficient to bind export factor NXF1-NXT1 and promote ATPase activity of DDX39B; in the complex THOC2 is the only component that directly interacts with DDX39B. TREX is recruited to spliced mRNAs by a transcription-independent mechanism, binds to mRNA upstream of the exon-junction complex (EJC) and is recruited in a splicing- and cap-dependent manner to a region near the 5' end of the mRNA where it functions in mRNA export to the cytoplasm via the TAP/NXF1 pathway. Required for NXF1 localization to the nuclear rim. THOC2 (and probably the THO complex) is involved in releasing mRNA from nuclear speckle domains. Plays a role for proper neuronal development.</text>
</comment>
<comment type="subunit">
    <text evidence="2">Component of the THO subcomplex, which is composed of THOC1, THOC2, THOC3, THOC5, THOC6 and THOC7. The THO subcomplex interacts with DDX39B to form the THO-DDX39B complex which multimerizes into a 28-subunit tetrameric assembly. Component of the transcription/export (TREX) complex at least composed of ALYREF/THOC4, DDX39B, SARNP/CIP29, CHTOP and the THO subcomplex; in the complex interacts with THOC1, THOC3, THOC5, THOC7 and DDX39B. TREX seems to have a dynamic structure involving ATP-dependent remodeling. Interacts with POLDIP3 and ZC3H11A (By similarity).</text>
</comment>
<comment type="subcellular location">
    <subcellularLocation>
        <location evidence="2">Nucleus</location>
    </subcellularLocation>
    <subcellularLocation>
        <location evidence="2">Nucleus speckle</location>
    </subcellularLocation>
    <subcellularLocation>
        <location evidence="2">Cytoplasm</location>
    </subcellularLocation>
</comment>
<comment type="similarity">
    <text evidence="5">Belongs to the THOC2 family.</text>
</comment>
<name>THOC2_DASNO</name>
<dbReference type="EMBL" id="DP001089">
    <property type="protein sequence ID" value="ACO71284.1"/>
    <property type="molecule type" value="Genomic_DNA"/>
</dbReference>
<dbReference type="SMR" id="C1FXW9"/>
<dbReference type="GO" id="GO:0005737">
    <property type="term" value="C:cytoplasm"/>
    <property type="evidence" value="ECO:0000250"/>
    <property type="project" value="UniProtKB"/>
</dbReference>
<dbReference type="GO" id="GO:0016607">
    <property type="term" value="C:nuclear speck"/>
    <property type="evidence" value="ECO:0007669"/>
    <property type="project" value="UniProtKB-SubCell"/>
</dbReference>
<dbReference type="GO" id="GO:0005634">
    <property type="term" value="C:nucleus"/>
    <property type="evidence" value="ECO:0000250"/>
    <property type="project" value="UniProtKB"/>
</dbReference>
<dbReference type="GO" id="GO:0000445">
    <property type="term" value="C:THO complex part of transcription export complex"/>
    <property type="evidence" value="ECO:0007669"/>
    <property type="project" value="TreeGrafter"/>
</dbReference>
<dbReference type="GO" id="GO:0003729">
    <property type="term" value="F:mRNA binding"/>
    <property type="evidence" value="ECO:0007669"/>
    <property type="project" value="TreeGrafter"/>
</dbReference>
<dbReference type="GO" id="GO:0048699">
    <property type="term" value="P:generation of neurons"/>
    <property type="evidence" value="ECO:0000250"/>
    <property type="project" value="UniProtKB"/>
</dbReference>
<dbReference type="GO" id="GO:0006406">
    <property type="term" value="P:mRNA export from nucleus"/>
    <property type="evidence" value="ECO:0007669"/>
    <property type="project" value="InterPro"/>
</dbReference>
<dbReference type="GO" id="GO:0006397">
    <property type="term" value="P:mRNA processing"/>
    <property type="evidence" value="ECO:0007669"/>
    <property type="project" value="UniProtKB-KW"/>
</dbReference>
<dbReference type="GO" id="GO:0048666">
    <property type="term" value="P:neuron development"/>
    <property type="evidence" value="ECO:0000250"/>
    <property type="project" value="UniProtKB"/>
</dbReference>
<dbReference type="GO" id="GO:0008380">
    <property type="term" value="P:RNA splicing"/>
    <property type="evidence" value="ECO:0007669"/>
    <property type="project" value="UniProtKB-KW"/>
</dbReference>
<dbReference type="InterPro" id="IPR040007">
    <property type="entry name" value="Tho2"/>
</dbReference>
<dbReference type="InterPro" id="IPR021418">
    <property type="entry name" value="THO_THOC2_C"/>
</dbReference>
<dbReference type="InterPro" id="IPR021726">
    <property type="entry name" value="THO_THOC2_N"/>
</dbReference>
<dbReference type="InterPro" id="IPR032302">
    <property type="entry name" value="THOC2_N"/>
</dbReference>
<dbReference type="PANTHER" id="PTHR21597:SF0">
    <property type="entry name" value="THO COMPLEX SUBUNIT 2"/>
    <property type="match status" value="1"/>
</dbReference>
<dbReference type="PANTHER" id="PTHR21597">
    <property type="entry name" value="THO2 PROTEIN"/>
    <property type="match status" value="1"/>
</dbReference>
<dbReference type="Pfam" id="PF11262">
    <property type="entry name" value="Tho2"/>
    <property type="match status" value="1"/>
</dbReference>
<dbReference type="Pfam" id="PF11732">
    <property type="entry name" value="Thoc2"/>
    <property type="match status" value="1"/>
</dbReference>
<dbReference type="Pfam" id="PF16134">
    <property type="entry name" value="THOC2_N"/>
    <property type="match status" value="2"/>
</dbReference>
<protein>
    <recommendedName>
        <fullName>THO complex subunit 2</fullName>
        <shortName>Tho2</shortName>
    </recommendedName>
</protein>
<evidence type="ECO:0000250" key="1">
    <source>
        <dbReference type="UniProtKB" id="B1AZI6"/>
    </source>
</evidence>
<evidence type="ECO:0000250" key="2">
    <source>
        <dbReference type="UniProtKB" id="Q8NI27"/>
    </source>
</evidence>
<evidence type="ECO:0000255" key="3"/>
<evidence type="ECO:0000256" key="4">
    <source>
        <dbReference type="SAM" id="MobiDB-lite"/>
    </source>
</evidence>
<evidence type="ECO:0000305" key="5"/>
<proteinExistence type="inferred from homology"/>
<keyword id="KW-0175">Coiled coil</keyword>
<keyword id="KW-0963">Cytoplasm</keyword>
<keyword id="KW-0507">mRNA processing</keyword>
<keyword id="KW-0508">mRNA splicing</keyword>
<keyword id="KW-0509">mRNA transport</keyword>
<keyword id="KW-0539">Nucleus</keyword>
<keyword id="KW-0597">Phosphoprotein</keyword>
<keyword id="KW-0694">RNA-binding</keyword>
<keyword id="KW-0813">Transport</keyword>
<gene>
    <name type="primary">THOC2</name>
</gene>